<feature type="chain" id="PRO_0000383918" description="Hydroxyethylthiazole kinase 1">
    <location>
        <begin position="1"/>
        <end position="285"/>
    </location>
</feature>
<feature type="binding site" evidence="1">
    <location>
        <position position="48"/>
    </location>
    <ligand>
        <name>substrate</name>
    </ligand>
</feature>
<feature type="binding site" evidence="1">
    <location>
        <position position="124"/>
    </location>
    <ligand>
        <name>ATP</name>
        <dbReference type="ChEBI" id="CHEBI:30616"/>
    </ligand>
</feature>
<feature type="binding site" evidence="1">
    <location>
        <position position="183"/>
    </location>
    <ligand>
        <name>ATP</name>
        <dbReference type="ChEBI" id="CHEBI:30616"/>
    </ligand>
</feature>
<feature type="binding site" evidence="1">
    <location>
        <position position="210"/>
    </location>
    <ligand>
        <name>substrate</name>
    </ligand>
</feature>
<protein>
    <recommendedName>
        <fullName evidence="1">Hydroxyethylthiazole kinase 1</fullName>
        <ecNumber evidence="1">2.7.1.50</ecNumber>
    </recommendedName>
    <alternativeName>
        <fullName evidence="1">4-methyl-5-beta-hydroxyethylthiazole kinase 1</fullName>
        <shortName evidence="1">TH kinase 1</shortName>
        <shortName evidence="1">Thz kinase 1</shortName>
    </alternativeName>
</protein>
<name>THIM1_METST</name>
<evidence type="ECO:0000255" key="1">
    <source>
        <dbReference type="HAMAP-Rule" id="MF_00228"/>
    </source>
</evidence>
<comment type="function">
    <text evidence="1">Catalyzes the phosphorylation of the hydroxyl group of 4-methyl-5-beta-hydroxyethylthiazole (THZ).</text>
</comment>
<comment type="catalytic activity">
    <reaction evidence="1">
        <text>5-(2-hydroxyethyl)-4-methylthiazole + ATP = 4-methyl-5-(2-phosphooxyethyl)-thiazole + ADP + H(+)</text>
        <dbReference type="Rhea" id="RHEA:24212"/>
        <dbReference type="ChEBI" id="CHEBI:15378"/>
        <dbReference type="ChEBI" id="CHEBI:17957"/>
        <dbReference type="ChEBI" id="CHEBI:30616"/>
        <dbReference type="ChEBI" id="CHEBI:58296"/>
        <dbReference type="ChEBI" id="CHEBI:456216"/>
        <dbReference type="EC" id="2.7.1.50"/>
    </reaction>
</comment>
<comment type="cofactor">
    <cofactor evidence="1">
        <name>Mg(2+)</name>
        <dbReference type="ChEBI" id="CHEBI:18420"/>
    </cofactor>
</comment>
<comment type="pathway">
    <text evidence="1">Cofactor biosynthesis; thiamine diphosphate biosynthesis; 4-methyl-5-(2-phosphoethyl)-thiazole from 5-(2-hydroxyethyl)-4-methylthiazole: step 1/1.</text>
</comment>
<comment type="similarity">
    <text evidence="1">Belongs to the Thz kinase family.</text>
</comment>
<gene>
    <name evidence="1" type="primary">thiM1</name>
    <name type="ordered locus">Msp_0682</name>
</gene>
<dbReference type="EC" id="2.7.1.50" evidence="1"/>
<dbReference type="EMBL" id="CP000102">
    <property type="protein sequence ID" value="ABC57080.1"/>
    <property type="molecule type" value="Genomic_DNA"/>
</dbReference>
<dbReference type="SMR" id="Q2NGH3"/>
<dbReference type="STRING" id="339860.Msp_0682"/>
<dbReference type="KEGG" id="mst:Msp_0682"/>
<dbReference type="eggNOG" id="arCOG00019">
    <property type="taxonomic scope" value="Archaea"/>
</dbReference>
<dbReference type="HOGENOM" id="CLU_019943_0_1_2"/>
<dbReference type="OrthoDB" id="214286at2157"/>
<dbReference type="UniPathway" id="UPA00060">
    <property type="reaction ID" value="UER00139"/>
</dbReference>
<dbReference type="Proteomes" id="UP000001931">
    <property type="component" value="Chromosome"/>
</dbReference>
<dbReference type="GO" id="GO:0005524">
    <property type="term" value="F:ATP binding"/>
    <property type="evidence" value="ECO:0007669"/>
    <property type="project" value="UniProtKB-UniRule"/>
</dbReference>
<dbReference type="GO" id="GO:0004417">
    <property type="term" value="F:hydroxyethylthiazole kinase activity"/>
    <property type="evidence" value="ECO:0007669"/>
    <property type="project" value="UniProtKB-UniRule"/>
</dbReference>
<dbReference type="GO" id="GO:0000287">
    <property type="term" value="F:magnesium ion binding"/>
    <property type="evidence" value="ECO:0007669"/>
    <property type="project" value="UniProtKB-UniRule"/>
</dbReference>
<dbReference type="GO" id="GO:0009228">
    <property type="term" value="P:thiamine biosynthetic process"/>
    <property type="evidence" value="ECO:0007669"/>
    <property type="project" value="UniProtKB-KW"/>
</dbReference>
<dbReference type="GO" id="GO:0009229">
    <property type="term" value="P:thiamine diphosphate biosynthetic process"/>
    <property type="evidence" value="ECO:0007669"/>
    <property type="project" value="UniProtKB-UniRule"/>
</dbReference>
<dbReference type="CDD" id="cd01170">
    <property type="entry name" value="THZ_kinase"/>
    <property type="match status" value="1"/>
</dbReference>
<dbReference type="Gene3D" id="3.40.1190.20">
    <property type="match status" value="1"/>
</dbReference>
<dbReference type="HAMAP" id="MF_00228">
    <property type="entry name" value="Thz_kinase"/>
    <property type="match status" value="1"/>
</dbReference>
<dbReference type="InterPro" id="IPR000417">
    <property type="entry name" value="Hyethyz_kinase"/>
</dbReference>
<dbReference type="InterPro" id="IPR029056">
    <property type="entry name" value="Ribokinase-like"/>
</dbReference>
<dbReference type="NCBIfam" id="NF006830">
    <property type="entry name" value="PRK09355.1"/>
    <property type="match status" value="1"/>
</dbReference>
<dbReference type="Pfam" id="PF02110">
    <property type="entry name" value="HK"/>
    <property type="match status" value="1"/>
</dbReference>
<dbReference type="PIRSF" id="PIRSF000513">
    <property type="entry name" value="Thz_kinase"/>
    <property type="match status" value="1"/>
</dbReference>
<dbReference type="PRINTS" id="PR01099">
    <property type="entry name" value="HYETHTZKNASE"/>
</dbReference>
<dbReference type="SUPFAM" id="SSF53613">
    <property type="entry name" value="Ribokinase-like"/>
    <property type="match status" value="1"/>
</dbReference>
<sequence>MSEYTLENIAQVVEILREKSPLTHCITNVVTVKDCANAVLAVGASPIMANAPEEAEEIVGISNSLVINIGTLTKEQIETMKKSAKFAIENNKPFILDPVGVGISNIRNQTPIDIITNSKPSIIRGNLSEIKAIAMMYDILDECTMAKGVDVAQCDIINKDTLISNCNLIKNISEKLNTTIAVSGPIDIISDGHDVYTIENGDAMMSRITGSGCMLGCVLGAYLAVTNPLEAAITGTLVMGIAGELAAKTARDNNKGTGSFGIYLIDELSKLNKSTILSQSKLNKM</sequence>
<accession>Q2NGH3</accession>
<organism>
    <name type="scientific">Methanosphaera stadtmanae (strain ATCC 43021 / DSM 3091 / JCM 11832 / MCB-3)</name>
    <dbReference type="NCBI Taxonomy" id="339860"/>
    <lineage>
        <taxon>Archaea</taxon>
        <taxon>Methanobacteriati</taxon>
        <taxon>Methanobacteriota</taxon>
        <taxon>Methanomada group</taxon>
        <taxon>Methanobacteria</taxon>
        <taxon>Methanobacteriales</taxon>
        <taxon>Methanobacteriaceae</taxon>
        <taxon>Methanosphaera</taxon>
    </lineage>
</organism>
<keyword id="KW-0067">ATP-binding</keyword>
<keyword id="KW-0418">Kinase</keyword>
<keyword id="KW-0460">Magnesium</keyword>
<keyword id="KW-0479">Metal-binding</keyword>
<keyword id="KW-0547">Nucleotide-binding</keyword>
<keyword id="KW-1185">Reference proteome</keyword>
<keyword id="KW-0784">Thiamine biosynthesis</keyword>
<keyword id="KW-0808">Transferase</keyword>
<proteinExistence type="inferred from homology"/>
<reference key="1">
    <citation type="journal article" date="2006" name="J. Bacteriol.">
        <title>The genome sequence of Methanosphaera stadtmanae reveals why this human intestinal archaeon is restricted to methanol and H2 for methane formation and ATP synthesis.</title>
        <authorList>
            <person name="Fricke W.F."/>
            <person name="Seedorf H."/>
            <person name="Henne A."/>
            <person name="Kruer M."/>
            <person name="Liesegang H."/>
            <person name="Hedderich R."/>
            <person name="Gottschalk G."/>
            <person name="Thauer R.K."/>
        </authorList>
    </citation>
    <scope>NUCLEOTIDE SEQUENCE [LARGE SCALE GENOMIC DNA]</scope>
    <source>
        <strain>ATCC 43021 / DSM 3091 / JCM 11832 / MCB-3</strain>
    </source>
</reference>